<protein>
    <recommendedName>
        <fullName evidence="1">Ribosome-recycling factor</fullName>
        <shortName evidence="1">RRF</shortName>
    </recommendedName>
    <alternativeName>
        <fullName evidence="1">Ribosome-releasing factor</fullName>
    </alternativeName>
</protein>
<gene>
    <name evidence="1" type="primary">frr</name>
    <name type="ordered locus">Acel_1539</name>
</gene>
<organism>
    <name type="scientific">Acidothermus cellulolyticus (strain ATCC 43068 / DSM 8971 / 11B)</name>
    <dbReference type="NCBI Taxonomy" id="351607"/>
    <lineage>
        <taxon>Bacteria</taxon>
        <taxon>Bacillati</taxon>
        <taxon>Actinomycetota</taxon>
        <taxon>Actinomycetes</taxon>
        <taxon>Acidothermales</taxon>
        <taxon>Acidothermaceae</taxon>
        <taxon>Acidothermus</taxon>
    </lineage>
</organism>
<feature type="chain" id="PRO_1000003095" description="Ribosome-recycling factor">
    <location>
        <begin position="1"/>
        <end position="185"/>
    </location>
</feature>
<name>RRF_ACIC1</name>
<evidence type="ECO:0000255" key="1">
    <source>
        <dbReference type="HAMAP-Rule" id="MF_00040"/>
    </source>
</evidence>
<dbReference type="EMBL" id="CP000481">
    <property type="protein sequence ID" value="ABK53311.1"/>
    <property type="molecule type" value="Genomic_DNA"/>
</dbReference>
<dbReference type="RefSeq" id="WP_011720374.1">
    <property type="nucleotide sequence ID" value="NC_008578.1"/>
</dbReference>
<dbReference type="SMR" id="A0LV51"/>
<dbReference type="FunCoup" id="A0LV51">
    <property type="interactions" value="244"/>
</dbReference>
<dbReference type="STRING" id="351607.Acel_1539"/>
<dbReference type="KEGG" id="ace:Acel_1539"/>
<dbReference type="eggNOG" id="COG0233">
    <property type="taxonomic scope" value="Bacteria"/>
</dbReference>
<dbReference type="HOGENOM" id="CLU_073981_2_0_11"/>
<dbReference type="InParanoid" id="A0LV51"/>
<dbReference type="OrthoDB" id="9804006at2"/>
<dbReference type="Proteomes" id="UP000008221">
    <property type="component" value="Chromosome"/>
</dbReference>
<dbReference type="GO" id="GO:0005737">
    <property type="term" value="C:cytoplasm"/>
    <property type="evidence" value="ECO:0007669"/>
    <property type="project" value="UniProtKB-SubCell"/>
</dbReference>
<dbReference type="GO" id="GO:0043023">
    <property type="term" value="F:ribosomal large subunit binding"/>
    <property type="evidence" value="ECO:0007669"/>
    <property type="project" value="TreeGrafter"/>
</dbReference>
<dbReference type="GO" id="GO:0006415">
    <property type="term" value="P:translational termination"/>
    <property type="evidence" value="ECO:0007669"/>
    <property type="project" value="UniProtKB-UniRule"/>
</dbReference>
<dbReference type="CDD" id="cd00520">
    <property type="entry name" value="RRF"/>
    <property type="match status" value="1"/>
</dbReference>
<dbReference type="FunFam" id="1.10.132.20:FF:000001">
    <property type="entry name" value="Ribosome-recycling factor"/>
    <property type="match status" value="1"/>
</dbReference>
<dbReference type="FunFam" id="3.30.1360.40:FF:000001">
    <property type="entry name" value="Ribosome-recycling factor"/>
    <property type="match status" value="1"/>
</dbReference>
<dbReference type="Gene3D" id="3.30.1360.40">
    <property type="match status" value="1"/>
</dbReference>
<dbReference type="Gene3D" id="1.10.132.20">
    <property type="entry name" value="Ribosome-recycling factor"/>
    <property type="match status" value="1"/>
</dbReference>
<dbReference type="HAMAP" id="MF_00040">
    <property type="entry name" value="RRF"/>
    <property type="match status" value="1"/>
</dbReference>
<dbReference type="InterPro" id="IPR002661">
    <property type="entry name" value="Ribosome_recyc_fac"/>
</dbReference>
<dbReference type="InterPro" id="IPR023584">
    <property type="entry name" value="Ribosome_recyc_fac_dom"/>
</dbReference>
<dbReference type="InterPro" id="IPR036191">
    <property type="entry name" value="RRF_sf"/>
</dbReference>
<dbReference type="NCBIfam" id="TIGR00496">
    <property type="entry name" value="frr"/>
    <property type="match status" value="1"/>
</dbReference>
<dbReference type="PANTHER" id="PTHR20982:SF3">
    <property type="entry name" value="MITOCHONDRIAL RIBOSOME RECYCLING FACTOR PSEUDO 1"/>
    <property type="match status" value="1"/>
</dbReference>
<dbReference type="PANTHER" id="PTHR20982">
    <property type="entry name" value="RIBOSOME RECYCLING FACTOR"/>
    <property type="match status" value="1"/>
</dbReference>
<dbReference type="Pfam" id="PF01765">
    <property type="entry name" value="RRF"/>
    <property type="match status" value="1"/>
</dbReference>
<dbReference type="SUPFAM" id="SSF55194">
    <property type="entry name" value="Ribosome recycling factor, RRF"/>
    <property type="match status" value="1"/>
</dbReference>
<keyword id="KW-0963">Cytoplasm</keyword>
<keyword id="KW-0648">Protein biosynthesis</keyword>
<keyword id="KW-1185">Reference proteome</keyword>
<comment type="function">
    <text evidence="1">Responsible for the release of ribosomes from messenger RNA at the termination of protein biosynthesis. May increase the efficiency of translation by recycling ribosomes from one round of translation to another.</text>
</comment>
<comment type="subcellular location">
    <subcellularLocation>
        <location evidence="1">Cytoplasm</location>
    </subcellularLocation>
</comment>
<comment type="similarity">
    <text evidence="1">Belongs to the RRF family.</text>
</comment>
<accession>A0LV51</accession>
<reference key="1">
    <citation type="journal article" date="2009" name="Genome Res.">
        <title>Complete genome of the cellulolytic thermophile Acidothermus cellulolyticus 11B provides insights into its ecophysiological and evolutionary adaptations.</title>
        <authorList>
            <person name="Barabote R.D."/>
            <person name="Xie G."/>
            <person name="Leu D.H."/>
            <person name="Normand P."/>
            <person name="Necsulea A."/>
            <person name="Daubin V."/>
            <person name="Medigue C."/>
            <person name="Adney W.S."/>
            <person name="Xu X.C."/>
            <person name="Lapidus A."/>
            <person name="Parales R.E."/>
            <person name="Detter C."/>
            <person name="Pujic P."/>
            <person name="Bruce D."/>
            <person name="Lavire C."/>
            <person name="Challacombe J.F."/>
            <person name="Brettin T.S."/>
            <person name="Berry A.M."/>
        </authorList>
    </citation>
    <scope>NUCLEOTIDE SEQUENCE [LARGE SCALE GENOMIC DNA]</scope>
    <source>
        <strain>ATCC 43068 / DSM 8971 / 11B</strain>
    </source>
</reference>
<sequence>MIDDTLLEAEEKMEKATNVARENFAAIRTGRANPALFSKITVEYYGTPTPLNQLASFTVADARLIVIHPYDKGSLRAIEKAIRDSDLGVNPTDDGSVIRVAIPPLTEERRRDYIKMARHEAEEARVAIRNIRRHAKDALDKLQKDGEVGEDDVRRAEKELDELTHKYVAHIDEMLKHKEAELLEV</sequence>
<proteinExistence type="inferred from homology"/>